<dbReference type="EC" id="3.6.5.3" evidence="2"/>
<dbReference type="EMBL" id="AL766847">
    <property type="protein sequence ID" value="CAD46426.1"/>
    <property type="molecule type" value="Genomic_DNA"/>
</dbReference>
<dbReference type="RefSeq" id="WP_001040730.1">
    <property type="nucleotide sequence ID" value="NC_004368.1"/>
</dbReference>
<dbReference type="SMR" id="Q8E645"/>
<dbReference type="GeneID" id="66885714"/>
<dbReference type="KEGG" id="san:tufA"/>
<dbReference type="eggNOG" id="COG0050">
    <property type="taxonomic scope" value="Bacteria"/>
</dbReference>
<dbReference type="HOGENOM" id="CLU_007265_0_0_9"/>
<dbReference type="Proteomes" id="UP000000823">
    <property type="component" value="Chromosome"/>
</dbReference>
<dbReference type="GO" id="GO:0005829">
    <property type="term" value="C:cytosol"/>
    <property type="evidence" value="ECO:0007669"/>
    <property type="project" value="TreeGrafter"/>
</dbReference>
<dbReference type="GO" id="GO:0005525">
    <property type="term" value="F:GTP binding"/>
    <property type="evidence" value="ECO:0007669"/>
    <property type="project" value="UniProtKB-UniRule"/>
</dbReference>
<dbReference type="GO" id="GO:0003924">
    <property type="term" value="F:GTPase activity"/>
    <property type="evidence" value="ECO:0007669"/>
    <property type="project" value="InterPro"/>
</dbReference>
<dbReference type="GO" id="GO:0003746">
    <property type="term" value="F:translation elongation factor activity"/>
    <property type="evidence" value="ECO:0007669"/>
    <property type="project" value="UniProtKB-UniRule"/>
</dbReference>
<dbReference type="CDD" id="cd01884">
    <property type="entry name" value="EF_Tu"/>
    <property type="match status" value="1"/>
</dbReference>
<dbReference type="CDD" id="cd03697">
    <property type="entry name" value="EFTU_II"/>
    <property type="match status" value="1"/>
</dbReference>
<dbReference type="CDD" id="cd03707">
    <property type="entry name" value="EFTU_III"/>
    <property type="match status" value="1"/>
</dbReference>
<dbReference type="FunFam" id="2.40.30.10:FF:000001">
    <property type="entry name" value="Elongation factor Tu"/>
    <property type="match status" value="1"/>
</dbReference>
<dbReference type="FunFam" id="3.40.50.300:FF:000003">
    <property type="entry name" value="Elongation factor Tu"/>
    <property type="match status" value="1"/>
</dbReference>
<dbReference type="Gene3D" id="3.40.50.300">
    <property type="entry name" value="P-loop containing nucleotide triphosphate hydrolases"/>
    <property type="match status" value="1"/>
</dbReference>
<dbReference type="Gene3D" id="2.40.30.10">
    <property type="entry name" value="Translation factors"/>
    <property type="match status" value="2"/>
</dbReference>
<dbReference type="HAMAP" id="MF_00118_B">
    <property type="entry name" value="EF_Tu_B"/>
    <property type="match status" value="1"/>
</dbReference>
<dbReference type="InterPro" id="IPR041709">
    <property type="entry name" value="EF-Tu_GTP-bd"/>
</dbReference>
<dbReference type="InterPro" id="IPR050055">
    <property type="entry name" value="EF-Tu_GTPase"/>
</dbReference>
<dbReference type="InterPro" id="IPR004161">
    <property type="entry name" value="EFTu-like_2"/>
</dbReference>
<dbReference type="InterPro" id="IPR033720">
    <property type="entry name" value="EFTU_2"/>
</dbReference>
<dbReference type="InterPro" id="IPR031157">
    <property type="entry name" value="G_TR_CS"/>
</dbReference>
<dbReference type="InterPro" id="IPR027417">
    <property type="entry name" value="P-loop_NTPase"/>
</dbReference>
<dbReference type="InterPro" id="IPR005225">
    <property type="entry name" value="Small_GTP-bd"/>
</dbReference>
<dbReference type="InterPro" id="IPR000795">
    <property type="entry name" value="T_Tr_GTP-bd_dom"/>
</dbReference>
<dbReference type="InterPro" id="IPR009000">
    <property type="entry name" value="Transl_B-barrel_sf"/>
</dbReference>
<dbReference type="InterPro" id="IPR009001">
    <property type="entry name" value="Transl_elong_EF1A/Init_IF2_C"/>
</dbReference>
<dbReference type="InterPro" id="IPR004541">
    <property type="entry name" value="Transl_elong_EFTu/EF1A_bac/org"/>
</dbReference>
<dbReference type="InterPro" id="IPR004160">
    <property type="entry name" value="Transl_elong_EFTu/EF1A_C"/>
</dbReference>
<dbReference type="NCBIfam" id="TIGR00485">
    <property type="entry name" value="EF-Tu"/>
    <property type="match status" value="1"/>
</dbReference>
<dbReference type="NCBIfam" id="NF000766">
    <property type="entry name" value="PRK00049.1"/>
    <property type="match status" value="1"/>
</dbReference>
<dbReference type="NCBIfam" id="NF009372">
    <property type="entry name" value="PRK12735.1"/>
    <property type="match status" value="1"/>
</dbReference>
<dbReference type="NCBIfam" id="NF009373">
    <property type="entry name" value="PRK12736.1"/>
    <property type="match status" value="1"/>
</dbReference>
<dbReference type="NCBIfam" id="TIGR00231">
    <property type="entry name" value="small_GTP"/>
    <property type="match status" value="1"/>
</dbReference>
<dbReference type="PANTHER" id="PTHR43721:SF22">
    <property type="entry name" value="ELONGATION FACTOR TU, MITOCHONDRIAL"/>
    <property type="match status" value="1"/>
</dbReference>
<dbReference type="PANTHER" id="PTHR43721">
    <property type="entry name" value="ELONGATION FACTOR TU-RELATED"/>
    <property type="match status" value="1"/>
</dbReference>
<dbReference type="Pfam" id="PF00009">
    <property type="entry name" value="GTP_EFTU"/>
    <property type="match status" value="1"/>
</dbReference>
<dbReference type="Pfam" id="PF03144">
    <property type="entry name" value="GTP_EFTU_D2"/>
    <property type="match status" value="1"/>
</dbReference>
<dbReference type="Pfam" id="PF03143">
    <property type="entry name" value="GTP_EFTU_D3"/>
    <property type="match status" value="1"/>
</dbReference>
<dbReference type="PRINTS" id="PR00315">
    <property type="entry name" value="ELONGATNFCT"/>
</dbReference>
<dbReference type="SUPFAM" id="SSF50465">
    <property type="entry name" value="EF-Tu/eEF-1alpha/eIF2-gamma C-terminal domain"/>
    <property type="match status" value="1"/>
</dbReference>
<dbReference type="SUPFAM" id="SSF52540">
    <property type="entry name" value="P-loop containing nucleoside triphosphate hydrolases"/>
    <property type="match status" value="1"/>
</dbReference>
<dbReference type="SUPFAM" id="SSF50447">
    <property type="entry name" value="Translation proteins"/>
    <property type="match status" value="1"/>
</dbReference>
<dbReference type="PROSITE" id="PS00301">
    <property type="entry name" value="G_TR_1"/>
    <property type="match status" value="1"/>
</dbReference>
<dbReference type="PROSITE" id="PS51722">
    <property type="entry name" value="G_TR_2"/>
    <property type="match status" value="1"/>
</dbReference>
<keyword id="KW-0963">Cytoplasm</keyword>
<keyword id="KW-0251">Elongation factor</keyword>
<keyword id="KW-0342">GTP-binding</keyword>
<keyword id="KW-0378">Hydrolase</keyword>
<keyword id="KW-0460">Magnesium</keyword>
<keyword id="KW-0479">Metal-binding</keyword>
<keyword id="KW-0547">Nucleotide-binding</keyword>
<keyword id="KW-0648">Protein biosynthesis</keyword>
<gene>
    <name evidence="2" type="primary">tuf</name>
    <name type="ordered locus">gbs0782</name>
</gene>
<accession>Q8E645</accession>
<proteinExistence type="inferred from homology"/>
<organism>
    <name type="scientific">Streptococcus agalactiae serotype III (strain NEM316)</name>
    <dbReference type="NCBI Taxonomy" id="211110"/>
    <lineage>
        <taxon>Bacteria</taxon>
        <taxon>Bacillati</taxon>
        <taxon>Bacillota</taxon>
        <taxon>Bacilli</taxon>
        <taxon>Lactobacillales</taxon>
        <taxon>Streptococcaceae</taxon>
        <taxon>Streptococcus</taxon>
    </lineage>
</organism>
<reference key="1">
    <citation type="journal article" date="2002" name="Mol. Microbiol.">
        <title>Genome sequence of Streptococcus agalactiae, a pathogen causing invasive neonatal disease.</title>
        <authorList>
            <person name="Glaser P."/>
            <person name="Rusniok C."/>
            <person name="Buchrieser C."/>
            <person name="Chevalier F."/>
            <person name="Frangeul L."/>
            <person name="Msadek T."/>
            <person name="Zouine M."/>
            <person name="Couve E."/>
            <person name="Lalioui L."/>
            <person name="Poyart C."/>
            <person name="Trieu-Cuot P."/>
            <person name="Kunst F."/>
        </authorList>
    </citation>
    <scope>NUCLEOTIDE SEQUENCE [LARGE SCALE GENOMIC DNA]</scope>
    <source>
        <strain>NEM316</strain>
    </source>
</reference>
<feature type="chain" id="PRO_1000015756" description="Elongation factor Tu">
    <location>
        <begin position="1"/>
        <end position="398"/>
    </location>
</feature>
<feature type="domain" description="tr-type G">
    <location>
        <begin position="10"/>
        <end position="207"/>
    </location>
</feature>
<feature type="region of interest" description="G1" evidence="1">
    <location>
        <begin position="19"/>
        <end position="26"/>
    </location>
</feature>
<feature type="region of interest" description="G2" evidence="1">
    <location>
        <begin position="63"/>
        <end position="67"/>
    </location>
</feature>
<feature type="region of interest" description="G3" evidence="1">
    <location>
        <begin position="84"/>
        <end position="87"/>
    </location>
</feature>
<feature type="region of interest" description="G4" evidence="1">
    <location>
        <begin position="139"/>
        <end position="142"/>
    </location>
</feature>
<feature type="region of interest" description="G5" evidence="1">
    <location>
        <begin position="177"/>
        <end position="179"/>
    </location>
</feature>
<feature type="binding site" evidence="2">
    <location>
        <begin position="19"/>
        <end position="26"/>
    </location>
    <ligand>
        <name>GTP</name>
        <dbReference type="ChEBI" id="CHEBI:37565"/>
    </ligand>
</feature>
<feature type="binding site" evidence="2">
    <location>
        <position position="26"/>
    </location>
    <ligand>
        <name>Mg(2+)</name>
        <dbReference type="ChEBI" id="CHEBI:18420"/>
    </ligand>
</feature>
<feature type="binding site" evidence="2">
    <location>
        <begin position="84"/>
        <end position="88"/>
    </location>
    <ligand>
        <name>GTP</name>
        <dbReference type="ChEBI" id="CHEBI:37565"/>
    </ligand>
</feature>
<feature type="binding site" evidence="2">
    <location>
        <begin position="139"/>
        <end position="142"/>
    </location>
    <ligand>
        <name>GTP</name>
        <dbReference type="ChEBI" id="CHEBI:37565"/>
    </ligand>
</feature>
<sequence>MAKEKYDRSKPHVNIGTIGHVDHGKTTLTAAITTVLARRLPTSVNQPKDYASIDAAPEERERGITINTAHVEYETEKRHYAHIDAPGHADYVKNMITGAAQMDGAILVVASTDGPMPQTREHILLSRQVGVKHLIVFMNKVDLVDDEELLELVEMEIRDLLSEYDFPGDDLPVIQGSALKALEGDEKYEDIIMELMSTVDEYIPEPERDTDKPLLLPVEDVFSITGRGTVASGRIDRGTVRVNDEVEIVGIKEDIQKAVVTGVEMFRKQLDEGLAGDNVGVLLRGVQRDEIERGQVLAKPGSINPHTKFKGEVYILSKEEGGRHTPFFNNYRPQFYFRTTDVTGSIELPAGTEMVMPGDNVTIEVELIHPIAVEQGTTFSIREGGRTVGSGIVSEIEA</sequence>
<comment type="function">
    <text evidence="2">GTP hydrolase that promotes the GTP-dependent binding of aminoacyl-tRNA to the A-site of ribosomes during protein biosynthesis.</text>
</comment>
<comment type="catalytic activity">
    <reaction evidence="2">
        <text>GTP + H2O = GDP + phosphate + H(+)</text>
        <dbReference type="Rhea" id="RHEA:19669"/>
        <dbReference type="ChEBI" id="CHEBI:15377"/>
        <dbReference type="ChEBI" id="CHEBI:15378"/>
        <dbReference type="ChEBI" id="CHEBI:37565"/>
        <dbReference type="ChEBI" id="CHEBI:43474"/>
        <dbReference type="ChEBI" id="CHEBI:58189"/>
        <dbReference type="EC" id="3.6.5.3"/>
    </reaction>
    <physiologicalReaction direction="left-to-right" evidence="2">
        <dbReference type="Rhea" id="RHEA:19670"/>
    </physiologicalReaction>
</comment>
<comment type="subunit">
    <text evidence="2">Monomer.</text>
</comment>
<comment type="subcellular location">
    <subcellularLocation>
        <location evidence="2">Cytoplasm</location>
    </subcellularLocation>
</comment>
<comment type="similarity">
    <text evidence="2">Belongs to the TRAFAC class translation factor GTPase superfamily. Classic translation factor GTPase family. EF-Tu/EF-1A subfamily.</text>
</comment>
<name>EFTU_STRA3</name>
<evidence type="ECO:0000250" key="1"/>
<evidence type="ECO:0000255" key="2">
    <source>
        <dbReference type="HAMAP-Rule" id="MF_00118"/>
    </source>
</evidence>
<protein>
    <recommendedName>
        <fullName evidence="2">Elongation factor Tu</fullName>
        <shortName evidence="2">EF-Tu</shortName>
        <ecNumber evidence="2">3.6.5.3</ecNumber>
    </recommendedName>
</protein>